<dbReference type="EMBL" id="CR925677">
    <property type="protein sequence ID" value="CAI28343.1"/>
    <property type="molecule type" value="Genomic_DNA"/>
</dbReference>
<dbReference type="RefSeq" id="WP_011155529.1">
    <property type="nucleotide sequence ID" value="NC_006831.1"/>
</dbReference>
<dbReference type="SMR" id="Q5FGJ5"/>
<dbReference type="GeneID" id="33057995"/>
<dbReference type="KEGG" id="erg:ERGA_CDS_08910"/>
<dbReference type="HOGENOM" id="CLU_040469_3_2_5"/>
<dbReference type="OrthoDB" id="9776733at2"/>
<dbReference type="Proteomes" id="UP000000533">
    <property type="component" value="Chromosome"/>
</dbReference>
<dbReference type="GO" id="GO:0005829">
    <property type="term" value="C:cytosol"/>
    <property type="evidence" value="ECO:0007669"/>
    <property type="project" value="TreeGrafter"/>
</dbReference>
<dbReference type="GO" id="GO:0005524">
    <property type="term" value="F:ATP binding"/>
    <property type="evidence" value="ECO:0007669"/>
    <property type="project" value="UniProtKB-UniRule"/>
</dbReference>
<dbReference type="GO" id="GO:0016887">
    <property type="term" value="F:ATP hydrolysis activity"/>
    <property type="evidence" value="ECO:0007669"/>
    <property type="project" value="InterPro"/>
</dbReference>
<dbReference type="GO" id="GO:0140664">
    <property type="term" value="F:ATP-dependent DNA damage sensor activity"/>
    <property type="evidence" value="ECO:0007669"/>
    <property type="project" value="InterPro"/>
</dbReference>
<dbReference type="GO" id="GO:0003684">
    <property type="term" value="F:damaged DNA binding"/>
    <property type="evidence" value="ECO:0007669"/>
    <property type="project" value="UniProtKB-UniRule"/>
</dbReference>
<dbReference type="GO" id="GO:0003697">
    <property type="term" value="F:single-stranded DNA binding"/>
    <property type="evidence" value="ECO:0007669"/>
    <property type="project" value="UniProtKB-UniRule"/>
</dbReference>
<dbReference type="GO" id="GO:0006310">
    <property type="term" value="P:DNA recombination"/>
    <property type="evidence" value="ECO:0007669"/>
    <property type="project" value="UniProtKB-UniRule"/>
</dbReference>
<dbReference type="GO" id="GO:0006281">
    <property type="term" value="P:DNA repair"/>
    <property type="evidence" value="ECO:0007669"/>
    <property type="project" value="UniProtKB-UniRule"/>
</dbReference>
<dbReference type="GO" id="GO:0009432">
    <property type="term" value="P:SOS response"/>
    <property type="evidence" value="ECO:0007669"/>
    <property type="project" value="UniProtKB-UniRule"/>
</dbReference>
<dbReference type="CDD" id="cd00983">
    <property type="entry name" value="RecA"/>
    <property type="match status" value="1"/>
</dbReference>
<dbReference type="FunFam" id="3.40.50.300:FF:000087">
    <property type="entry name" value="Recombinase RecA"/>
    <property type="match status" value="1"/>
</dbReference>
<dbReference type="Gene3D" id="3.40.50.300">
    <property type="entry name" value="P-loop containing nucleotide triphosphate hydrolases"/>
    <property type="match status" value="1"/>
</dbReference>
<dbReference type="HAMAP" id="MF_00268">
    <property type="entry name" value="RecA"/>
    <property type="match status" value="1"/>
</dbReference>
<dbReference type="InterPro" id="IPR003593">
    <property type="entry name" value="AAA+_ATPase"/>
</dbReference>
<dbReference type="InterPro" id="IPR013765">
    <property type="entry name" value="DNA_recomb/repair_RecA"/>
</dbReference>
<dbReference type="InterPro" id="IPR020584">
    <property type="entry name" value="DNA_recomb/repair_RecA_CS"/>
</dbReference>
<dbReference type="InterPro" id="IPR027417">
    <property type="entry name" value="P-loop_NTPase"/>
</dbReference>
<dbReference type="InterPro" id="IPR049261">
    <property type="entry name" value="RecA-like_C"/>
</dbReference>
<dbReference type="InterPro" id="IPR049428">
    <property type="entry name" value="RecA-like_N"/>
</dbReference>
<dbReference type="InterPro" id="IPR020588">
    <property type="entry name" value="RecA_ATP-bd"/>
</dbReference>
<dbReference type="InterPro" id="IPR023400">
    <property type="entry name" value="RecA_C_sf"/>
</dbReference>
<dbReference type="InterPro" id="IPR020587">
    <property type="entry name" value="RecA_monomer-monomer_interface"/>
</dbReference>
<dbReference type="NCBIfam" id="TIGR02012">
    <property type="entry name" value="tigrfam_recA"/>
    <property type="match status" value="1"/>
</dbReference>
<dbReference type="PANTHER" id="PTHR45900:SF1">
    <property type="entry name" value="MITOCHONDRIAL DNA REPAIR PROTEIN RECA HOMOLOG-RELATED"/>
    <property type="match status" value="1"/>
</dbReference>
<dbReference type="PANTHER" id="PTHR45900">
    <property type="entry name" value="RECA"/>
    <property type="match status" value="1"/>
</dbReference>
<dbReference type="Pfam" id="PF00154">
    <property type="entry name" value="RecA"/>
    <property type="match status" value="1"/>
</dbReference>
<dbReference type="Pfam" id="PF21096">
    <property type="entry name" value="RecA_C"/>
    <property type="match status" value="1"/>
</dbReference>
<dbReference type="PRINTS" id="PR00142">
    <property type="entry name" value="RECA"/>
</dbReference>
<dbReference type="SMART" id="SM00382">
    <property type="entry name" value="AAA"/>
    <property type="match status" value="1"/>
</dbReference>
<dbReference type="SUPFAM" id="SSF52540">
    <property type="entry name" value="P-loop containing nucleoside triphosphate hydrolases"/>
    <property type="match status" value="1"/>
</dbReference>
<dbReference type="SUPFAM" id="SSF54752">
    <property type="entry name" value="RecA protein, C-terminal domain"/>
    <property type="match status" value="1"/>
</dbReference>
<dbReference type="PROSITE" id="PS00321">
    <property type="entry name" value="RECA_1"/>
    <property type="match status" value="1"/>
</dbReference>
<dbReference type="PROSITE" id="PS50162">
    <property type="entry name" value="RECA_2"/>
    <property type="match status" value="1"/>
</dbReference>
<dbReference type="PROSITE" id="PS50163">
    <property type="entry name" value="RECA_3"/>
    <property type="match status" value="1"/>
</dbReference>
<sequence length="357" mass="38670">MSDTKNLNHDRQKALDNAISQIEKAFGRGAIMKLKQGAIEKIDSIPTGSIALDTALGIGGFPKGRIIEIFGPESSGKTTLALHVIAESQKKGGNCAFIDAEHALDIMYARKLGVNTGDLIVSQPDTGEQALHIVEYLICSGAIDVIVVDSVAALTPRAEIEGDMGDQHMGLQARLLSHALRKLTSIVSKANCILIFINQIRMKIGVVYGNPETTTGGNALKFYSSVRLDIRKVSAIKDKDVIIGNQTKVKVVKNKVAPPFKQVDFDIMYNEGISKVGEIIDMGVKLNIVEKAGSYYSYNSVRLGQGKENAKLYLKNNPSTADEIEQKIRASLQASDNDVSCFNAEVDSISDMDVPVF</sequence>
<protein>
    <recommendedName>
        <fullName evidence="1">Protein RecA</fullName>
    </recommendedName>
    <alternativeName>
        <fullName evidence="1">Recombinase A</fullName>
    </alternativeName>
</protein>
<organism>
    <name type="scientific">Ehrlichia ruminantium (strain Gardel)</name>
    <dbReference type="NCBI Taxonomy" id="302409"/>
    <lineage>
        <taxon>Bacteria</taxon>
        <taxon>Pseudomonadati</taxon>
        <taxon>Pseudomonadota</taxon>
        <taxon>Alphaproteobacteria</taxon>
        <taxon>Rickettsiales</taxon>
        <taxon>Anaplasmataceae</taxon>
        <taxon>Ehrlichia</taxon>
    </lineage>
</organism>
<gene>
    <name evidence="1" type="primary">recA</name>
    <name type="ordered locus">ERGA_CDS_08910</name>
</gene>
<proteinExistence type="inferred from homology"/>
<name>RECA_EHRRG</name>
<feature type="chain" id="PRO_0000122706" description="Protein RecA">
    <location>
        <begin position="1"/>
        <end position="357"/>
    </location>
</feature>
<feature type="binding site" evidence="1">
    <location>
        <begin position="71"/>
        <end position="78"/>
    </location>
    <ligand>
        <name>ATP</name>
        <dbReference type="ChEBI" id="CHEBI:30616"/>
    </ligand>
</feature>
<keyword id="KW-0067">ATP-binding</keyword>
<keyword id="KW-0963">Cytoplasm</keyword>
<keyword id="KW-0227">DNA damage</keyword>
<keyword id="KW-0233">DNA recombination</keyword>
<keyword id="KW-0234">DNA repair</keyword>
<keyword id="KW-0238">DNA-binding</keyword>
<keyword id="KW-0547">Nucleotide-binding</keyword>
<keyword id="KW-0742">SOS response</keyword>
<evidence type="ECO:0000255" key="1">
    <source>
        <dbReference type="HAMAP-Rule" id="MF_00268"/>
    </source>
</evidence>
<reference key="1">
    <citation type="journal article" date="2006" name="J. Bacteriol.">
        <title>Comparative genomic analysis of three strains of Ehrlichia ruminantium reveals an active process of genome size plasticity.</title>
        <authorList>
            <person name="Frutos R."/>
            <person name="Viari A."/>
            <person name="Ferraz C."/>
            <person name="Morgat A."/>
            <person name="Eychenie S."/>
            <person name="Kandassamy Y."/>
            <person name="Chantal I."/>
            <person name="Bensaid A."/>
            <person name="Coissac E."/>
            <person name="Vachiery N."/>
            <person name="Demaille J."/>
            <person name="Martinez D."/>
        </authorList>
    </citation>
    <scope>NUCLEOTIDE SEQUENCE [LARGE SCALE GENOMIC DNA]</scope>
    <source>
        <strain>Gardel</strain>
    </source>
</reference>
<accession>Q5FGJ5</accession>
<comment type="function">
    <text evidence="1">Can catalyze the hydrolysis of ATP in the presence of single-stranded DNA, the ATP-dependent uptake of single-stranded DNA by duplex DNA, and the ATP-dependent hybridization of homologous single-stranded DNAs. It interacts with LexA causing its activation and leading to its autocatalytic cleavage.</text>
</comment>
<comment type="subcellular location">
    <subcellularLocation>
        <location evidence="1">Cytoplasm</location>
    </subcellularLocation>
</comment>
<comment type="similarity">
    <text evidence="1">Belongs to the RecA family.</text>
</comment>